<comment type="function">
    <text evidence="1">Catalyzes the phosphorylation of the hydroxyl group of 4-methyl-5-beta-hydroxyethylthiazole (THZ).</text>
</comment>
<comment type="catalytic activity">
    <reaction evidence="1">
        <text>5-(2-hydroxyethyl)-4-methylthiazole + ATP = 4-methyl-5-(2-phosphooxyethyl)-thiazole + ADP + H(+)</text>
        <dbReference type="Rhea" id="RHEA:24212"/>
        <dbReference type="ChEBI" id="CHEBI:15378"/>
        <dbReference type="ChEBI" id="CHEBI:17957"/>
        <dbReference type="ChEBI" id="CHEBI:30616"/>
        <dbReference type="ChEBI" id="CHEBI:58296"/>
        <dbReference type="ChEBI" id="CHEBI:456216"/>
        <dbReference type="EC" id="2.7.1.50"/>
    </reaction>
</comment>
<comment type="cofactor">
    <cofactor evidence="1">
        <name>Mg(2+)</name>
        <dbReference type="ChEBI" id="CHEBI:18420"/>
    </cofactor>
</comment>
<comment type="pathway">
    <text evidence="1">Cofactor biosynthesis; thiamine diphosphate biosynthesis; 4-methyl-5-(2-phosphoethyl)-thiazole from 5-(2-hydroxyethyl)-4-methylthiazole: step 1/1.</text>
</comment>
<comment type="similarity">
    <text evidence="1">Belongs to the Thz kinase family.</text>
</comment>
<reference key="1">
    <citation type="journal article" date="2008" name="PLoS Genet.">
        <title>Complete genome sequence of the N2-fixing broad host range endophyte Klebsiella pneumoniae 342 and virulence predictions verified in mice.</title>
        <authorList>
            <person name="Fouts D.E."/>
            <person name="Tyler H.L."/>
            <person name="DeBoy R.T."/>
            <person name="Daugherty S."/>
            <person name="Ren Q."/>
            <person name="Badger J.H."/>
            <person name="Durkin A.S."/>
            <person name="Huot H."/>
            <person name="Shrivastava S."/>
            <person name="Kothari S."/>
            <person name="Dodson R.J."/>
            <person name="Mohamoud Y."/>
            <person name="Khouri H."/>
            <person name="Roesch L.F.W."/>
            <person name="Krogfelt K.A."/>
            <person name="Struve C."/>
            <person name="Triplett E.W."/>
            <person name="Methe B.A."/>
        </authorList>
    </citation>
    <scope>NUCLEOTIDE SEQUENCE [LARGE SCALE GENOMIC DNA]</scope>
    <source>
        <strain>342</strain>
    </source>
</reference>
<accession>B5XP99</accession>
<proteinExistence type="inferred from homology"/>
<dbReference type="EC" id="2.7.1.50" evidence="1"/>
<dbReference type="EMBL" id="CP000964">
    <property type="protein sequence ID" value="ACI07032.1"/>
    <property type="molecule type" value="Genomic_DNA"/>
</dbReference>
<dbReference type="SMR" id="B5XP99"/>
<dbReference type="KEGG" id="kpe:KPK_1618"/>
<dbReference type="HOGENOM" id="CLU_019943_0_1_6"/>
<dbReference type="UniPathway" id="UPA00060">
    <property type="reaction ID" value="UER00139"/>
</dbReference>
<dbReference type="Proteomes" id="UP000001734">
    <property type="component" value="Chromosome"/>
</dbReference>
<dbReference type="GO" id="GO:0005524">
    <property type="term" value="F:ATP binding"/>
    <property type="evidence" value="ECO:0007669"/>
    <property type="project" value="UniProtKB-UniRule"/>
</dbReference>
<dbReference type="GO" id="GO:0004417">
    <property type="term" value="F:hydroxyethylthiazole kinase activity"/>
    <property type="evidence" value="ECO:0007669"/>
    <property type="project" value="UniProtKB-UniRule"/>
</dbReference>
<dbReference type="GO" id="GO:0000287">
    <property type="term" value="F:magnesium ion binding"/>
    <property type="evidence" value="ECO:0007669"/>
    <property type="project" value="UniProtKB-UniRule"/>
</dbReference>
<dbReference type="GO" id="GO:0009228">
    <property type="term" value="P:thiamine biosynthetic process"/>
    <property type="evidence" value="ECO:0007669"/>
    <property type="project" value="UniProtKB-KW"/>
</dbReference>
<dbReference type="GO" id="GO:0009229">
    <property type="term" value="P:thiamine diphosphate biosynthetic process"/>
    <property type="evidence" value="ECO:0007669"/>
    <property type="project" value="UniProtKB-UniRule"/>
</dbReference>
<dbReference type="CDD" id="cd01170">
    <property type="entry name" value="THZ_kinase"/>
    <property type="match status" value="1"/>
</dbReference>
<dbReference type="FunFam" id="3.40.1190.20:FF:000015">
    <property type="entry name" value="Hydroxyethylthiazole kinase"/>
    <property type="match status" value="1"/>
</dbReference>
<dbReference type="Gene3D" id="3.40.1190.20">
    <property type="match status" value="1"/>
</dbReference>
<dbReference type="HAMAP" id="MF_00228">
    <property type="entry name" value="Thz_kinase"/>
    <property type="match status" value="1"/>
</dbReference>
<dbReference type="InterPro" id="IPR000417">
    <property type="entry name" value="Hyethyz_kinase"/>
</dbReference>
<dbReference type="InterPro" id="IPR029056">
    <property type="entry name" value="Ribokinase-like"/>
</dbReference>
<dbReference type="NCBIfam" id="NF006830">
    <property type="entry name" value="PRK09355.1"/>
    <property type="match status" value="1"/>
</dbReference>
<dbReference type="NCBIfam" id="TIGR00694">
    <property type="entry name" value="thiM"/>
    <property type="match status" value="1"/>
</dbReference>
<dbReference type="Pfam" id="PF02110">
    <property type="entry name" value="HK"/>
    <property type="match status" value="1"/>
</dbReference>
<dbReference type="PIRSF" id="PIRSF000513">
    <property type="entry name" value="Thz_kinase"/>
    <property type="match status" value="1"/>
</dbReference>
<dbReference type="PRINTS" id="PR01099">
    <property type="entry name" value="HYETHTZKNASE"/>
</dbReference>
<dbReference type="SUPFAM" id="SSF53613">
    <property type="entry name" value="Ribokinase-like"/>
    <property type="match status" value="1"/>
</dbReference>
<gene>
    <name evidence="1" type="primary">thiM</name>
    <name type="ordered locus">KPK_1618</name>
</gene>
<evidence type="ECO:0000255" key="1">
    <source>
        <dbReference type="HAMAP-Rule" id="MF_00228"/>
    </source>
</evidence>
<organism>
    <name type="scientific">Klebsiella pneumoniae (strain 342)</name>
    <dbReference type="NCBI Taxonomy" id="507522"/>
    <lineage>
        <taxon>Bacteria</taxon>
        <taxon>Pseudomonadati</taxon>
        <taxon>Pseudomonadota</taxon>
        <taxon>Gammaproteobacteria</taxon>
        <taxon>Enterobacterales</taxon>
        <taxon>Enterobacteriaceae</taxon>
        <taxon>Klebsiella/Raoultella group</taxon>
        <taxon>Klebsiella</taxon>
        <taxon>Klebsiella pneumoniae complex</taxon>
    </lineage>
</organism>
<keyword id="KW-0067">ATP-binding</keyword>
<keyword id="KW-0418">Kinase</keyword>
<keyword id="KW-0460">Magnesium</keyword>
<keyword id="KW-0479">Metal-binding</keyword>
<keyword id="KW-0547">Nucleotide-binding</keyword>
<keyword id="KW-0784">Thiamine biosynthesis</keyword>
<keyword id="KW-0808">Transferase</keyword>
<name>THIM_KLEP3</name>
<protein>
    <recommendedName>
        <fullName evidence="1">Hydroxyethylthiazole kinase</fullName>
        <ecNumber evidence="1">2.7.1.50</ecNumber>
    </recommendedName>
    <alternativeName>
        <fullName evidence="1">4-methyl-5-beta-hydroxyethylthiazole kinase</fullName>
        <shortName evidence="1">TH kinase</shortName>
        <shortName evidence="1">Thz kinase</shortName>
    </alternativeName>
</protein>
<feature type="chain" id="PRO_1000100416" description="Hydroxyethylthiazole kinase">
    <location>
        <begin position="1"/>
        <end position="257"/>
    </location>
</feature>
<feature type="binding site" evidence="1">
    <location>
        <position position="49"/>
    </location>
    <ligand>
        <name>substrate</name>
    </ligand>
</feature>
<feature type="binding site" evidence="1">
    <location>
        <position position="124"/>
    </location>
    <ligand>
        <name>ATP</name>
        <dbReference type="ChEBI" id="CHEBI:30616"/>
    </ligand>
</feature>
<feature type="binding site" evidence="1">
    <location>
        <position position="170"/>
    </location>
    <ligand>
        <name>ATP</name>
        <dbReference type="ChEBI" id="CHEBI:30616"/>
    </ligand>
</feature>
<feature type="binding site" evidence="1">
    <location>
        <position position="197"/>
    </location>
    <ligand>
        <name>substrate</name>
    </ligand>
</feature>
<sequence>MPELLNPAPVAHLRHLLRAHSPLVHCMTNDVVQTFTANVLLAVGASPAMVIDPREAAQFAAIADALLINVGTLTEDRAVAMRAAVEHARQAGKPWTLDPVAVGALTVRTAFCHELLALQPAAIRGNASEILALAGMSAGGRGVDTTDTAAAALPAAQALARRLATVVAVTGEVDYVTDGERVLSVAGGNPLMTRVVGTGCALSAVVAASAALPGDRLENVAAACGLMKQAGEIAARQGGPGSFIPAFLDALYQEVQG</sequence>